<organism>
    <name type="scientific">Staphylococcus aureus (strain Mu3 / ATCC 700698)</name>
    <dbReference type="NCBI Taxonomy" id="418127"/>
    <lineage>
        <taxon>Bacteria</taxon>
        <taxon>Bacillati</taxon>
        <taxon>Bacillota</taxon>
        <taxon>Bacilli</taxon>
        <taxon>Bacillales</taxon>
        <taxon>Staphylococcaceae</taxon>
        <taxon>Staphylococcus</taxon>
    </lineage>
</organism>
<proteinExistence type="inferred from homology"/>
<comment type="similarity">
    <text evidence="1">Belongs to the bacterial ribosomal protein bS16 family.</text>
</comment>
<accession>A7X1K6</accession>
<gene>
    <name evidence="1" type="primary">rpsP</name>
    <name type="ordered locus">SAHV_1228</name>
</gene>
<sequence>MAVKIRLTRLGSKRNPFYRIVVADARSPRDGRIIEQIGTYNPTSANAPEIKVDEALALKWLNDGAKPTDTVHNILSKEGIMKKFDEQKKAK</sequence>
<dbReference type="EMBL" id="AP009324">
    <property type="protein sequence ID" value="BAF78111.1"/>
    <property type="molecule type" value="Genomic_DNA"/>
</dbReference>
<dbReference type="RefSeq" id="WP_000268754.1">
    <property type="nucleotide sequence ID" value="NZ_CTYB01000004.1"/>
</dbReference>
<dbReference type="SMR" id="A7X1K6"/>
<dbReference type="GeneID" id="66839430"/>
<dbReference type="KEGG" id="saw:SAHV_1228"/>
<dbReference type="HOGENOM" id="CLU_100590_5_0_9"/>
<dbReference type="GO" id="GO:0005737">
    <property type="term" value="C:cytoplasm"/>
    <property type="evidence" value="ECO:0007669"/>
    <property type="project" value="UniProtKB-ARBA"/>
</dbReference>
<dbReference type="GO" id="GO:0015935">
    <property type="term" value="C:small ribosomal subunit"/>
    <property type="evidence" value="ECO:0007669"/>
    <property type="project" value="TreeGrafter"/>
</dbReference>
<dbReference type="GO" id="GO:0003735">
    <property type="term" value="F:structural constituent of ribosome"/>
    <property type="evidence" value="ECO:0007669"/>
    <property type="project" value="InterPro"/>
</dbReference>
<dbReference type="GO" id="GO:0006412">
    <property type="term" value="P:translation"/>
    <property type="evidence" value="ECO:0007669"/>
    <property type="project" value="UniProtKB-UniRule"/>
</dbReference>
<dbReference type="FunFam" id="3.30.1320.10:FF:000002">
    <property type="entry name" value="30S ribosomal protein S16"/>
    <property type="match status" value="1"/>
</dbReference>
<dbReference type="Gene3D" id="3.30.1320.10">
    <property type="match status" value="1"/>
</dbReference>
<dbReference type="HAMAP" id="MF_00385">
    <property type="entry name" value="Ribosomal_bS16"/>
    <property type="match status" value="1"/>
</dbReference>
<dbReference type="InterPro" id="IPR000307">
    <property type="entry name" value="Ribosomal_bS16"/>
</dbReference>
<dbReference type="InterPro" id="IPR023803">
    <property type="entry name" value="Ribosomal_bS16_dom_sf"/>
</dbReference>
<dbReference type="NCBIfam" id="TIGR00002">
    <property type="entry name" value="S16"/>
    <property type="match status" value="1"/>
</dbReference>
<dbReference type="PANTHER" id="PTHR12919">
    <property type="entry name" value="30S RIBOSOMAL PROTEIN S16"/>
    <property type="match status" value="1"/>
</dbReference>
<dbReference type="PANTHER" id="PTHR12919:SF20">
    <property type="entry name" value="SMALL RIBOSOMAL SUBUNIT PROTEIN BS16M"/>
    <property type="match status" value="1"/>
</dbReference>
<dbReference type="Pfam" id="PF00886">
    <property type="entry name" value="Ribosomal_S16"/>
    <property type="match status" value="1"/>
</dbReference>
<dbReference type="SUPFAM" id="SSF54565">
    <property type="entry name" value="Ribosomal protein S16"/>
    <property type="match status" value="1"/>
</dbReference>
<name>RS16_STAA1</name>
<protein>
    <recommendedName>
        <fullName evidence="1">Small ribosomal subunit protein bS16</fullName>
    </recommendedName>
    <alternativeName>
        <fullName evidence="2">30S ribosomal protein S16</fullName>
    </alternativeName>
</protein>
<reference key="1">
    <citation type="journal article" date="2008" name="Antimicrob. Agents Chemother.">
        <title>Mutated response regulator graR is responsible for phenotypic conversion of Staphylococcus aureus from heterogeneous vancomycin-intermediate resistance to vancomycin-intermediate resistance.</title>
        <authorList>
            <person name="Neoh H.-M."/>
            <person name="Cui L."/>
            <person name="Yuzawa H."/>
            <person name="Takeuchi F."/>
            <person name="Matsuo M."/>
            <person name="Hiramatsu K."/>
        </authorList>
    </citation>
    <scope>NUCLEOTIDE SEQUENCE [LARGE SCALE GENOMIC DNA]</scope>
    <source>
        <strain>Mu3 / ATCC 700698</strain>
    </source>
</reference>
<feature type="chain" id="PRO_1000049356" description="Small ribosomal subunit protein bS16">
    <location>
        <begin position="1"/>
        <end position="91"/>
    </location>
</feature>
<evidence type="ECO:0000255" key="1">
    <source>
        <dbReference type="HAMAP-Rule" id="MF_00385"/>
    </source>
</evidence>
<evidence type="ECO:0000305" key="2"/>
<keyword id="KW-0687">Ribonucleoprotein</keyword>
<keyword id="KW-0689">Ribosomal protein</keyword>